<proteinExistence type="inferred from homology"/>
<sequence>MLSAFKLHNNRLSRLELDESDDLASSLWVDLVEPEEGERERVQTELGQSLATRPELDDIEASARFFEDEDGLHIHSFFYYEDADDHAGNSTVAFTIRDGRLYTLRERELPAFRLYRMRARNQTLVDGNAYELLLDLFETKIEQLADEIENIYSDLEALSRVIMEGQQGDEYDAALSTLAEQEDIGWKVRLCLMDTQRALNFLVRKARLPSSQLEQAREVLRDIESLLPHNESLFQKVNFLMQAAMGFINIEQNRIIKIFSVVSVVFLPPTLVASSYGMNFEFMPELRWSFGYPGAIALMIIAGLAPYLYFKRKNWL</sequence>
<dbReference type="EMBL" id="BX936398">
    <property type="protein sequence ID" value="CAH19438.1"/>
    <property type="molecule type" value="Genomic_DNA"/>
</dbReference>
<dbReference type="RefSeq" id="WP_002211480.1">
    <property type="nucleotide sequence ID" value="NZ_CP009712.1"/>
</dbReference>
<dbReference type="SMR" id="Q66FY7"/>
<dbReference type="GeneID" id="57974871"/>
<dbReference type="KEGG" id="ypo:BZ17_2385"/>
<dbReference type="KEGG" id="yps:YPTB0198"/>
<dbReference type="PATRIC" id="fig|273123.14.peg.2507"/>
<dbReference type="Proteomes" id="UP000001011">
    <property type="component" value="Chromosome"/>
</dbReference>
<dbReference type="GO" id="GO:0005886">
    <property type="term" value="C:plasma membrane"/>
    <property type="evidence" value="ECO:0007669"/>
    <property type="project" value="UniProtKB-SubCell"/>
</dbReference>
<dbReference type="GO" id="GO:0015087">
    <property type="term" value="F:cobalt ion transmembrane transporter activity"/>
    <property type="evidence" value="ECO:0007669"/>
    <property type="project" value="InterPro"/>
</dbReference>
<dbReference type="GO" id="GO:0015095">
    <property type="term" value="F:magnesium ion transmembrane transporter activity"/>
    <property type="evidence" value="ECO:0007669"/>
    <property type="project" value="InterPro"/>
</dbReference>
<dbReference type="GO" id="GO:0015099">
    <property type="term" value="F:nickel cation transmembrane transporter activity"/>
    <property type="evidence" value="ECO:0007669"/>
    <property type="project" value="TreeGrafter"/>
</dbReference>
<dbReference type="CDD" id="cd12835">
    <property type="entry name" value="EcCorA-like_1"/>
    <property type="match status" value="1"/>
</dbReference>
<dbReference type="FunFam" id="1.20.58.340:FF:000001">
    <property type="entry name" value="Magnesium transport protein CorA"/>
    <property type="match status" value="1"/>
</dbReference>
<dbReference type="Gene3D" id="1.20.58.340">
    <property type="entry name" value="Magnesium transport protein CorA, transmembrane region"/>
    <property type="match status" value="1"/>
</dbReference>
<dbReference type="InterPro" id="IPR045861">
    <property type="entry name" value="CorA_cytoplasmic_dom"/>
</dbReference>
<dbReference type="InterPro" id="IPR050829">
    <property type="entry name" value="CorA_MIT"/>
</dbReference>
<dbReference type="InterPro" id="IPR045863">
    <property type="entry name" value="CorA_TM1_TM2"/>
</dbReference>
<dbReference type="InterPro" id="IPR004488">
    <property type="entry name" value="Mg/Co-transport_prot_CorA"/>
</dbReference>
<dbReference type="InterPro" id="IPR002523">
    <property type="entry name" value="MgTranspt_CorA/ZnTranspt_ZntB"/>
</dbReference>
<dbReference type="NCBIfam" id="TIGR00383">
    <property type="entry name" value="corA"/>
    <property type="match status" value="1"/>
</dbReference>
<dbReference type="PANTHER" id="PTHR47685">
    <property type="entry name" value="MAGNESIUM TRANSPORT PROTEIN CORA"/>
    <property type="match status" value="1"/>
</dbReference>
<dbReference type="PANTHER" id="PTHR47685:SF1">
    <property type="entry name" value="MAGNESIUM TRANSPORT PROTEIN CORA"/>
    <property type="match status" value="1"/>
</dbReference>
<dbReference type="Pfam" id="PF01544">
    <property type="entry name" value="CorA"/>
    <property type="match status" value="1"/>
</dbReference>
<dbReference type="SUPFAM" id="SSF143865">
    <property type="entry name" value="CorA soluble domain-like"/>
    <property type="match status" value="1"/>
</dbReference>
<dbReference type="SUPFAM" id="SSF144083">
    <property type="entry name" value="Magnesium transport protein CorA, transmembrane region"/>
    <property type="match status" value="1"/>
</dbReference>
<keyword id="KW-0997">Cell inner membrane</keyword>
<keyword id="KW-1003">Cell membrane</keyword>
<keyword id="KW-0406">Ion transport</keyword>
<keyword id="KW-0460">Magnesium</keyword>
<keyword id="KW-0472">Membrane</keyword>
<keyword id="KW-0812">Transmembrane</keyword>
<keyword id="KW-1133">Transmembrane helix</keyword>
<keyword id="KW-0813">Transport</keyword>
<name>CORA_YERPS</name>
<protein>
    <recommendedName>
        <fullName>Magnesium transport protein CorA</fullName>
    </recommendedName>
</protein>
<reference key="1">
    <citation type="journal article" date="2004" name="Proc. Natl. Acad. Sci. U.S.A.">
        <title>Insights into the evolution of Yersinia pestis through whole-genome comparison with Yersinia pseudotuberculosis.</title>
        <authorList>
            <person name="Chain P.S.G."/>
            <person name="Carniel E."/>
            <person name="Larimer F.W."/>
            <person name="Lamerdin J."/>
            <person name="Stoutland P.O."/>
            <person name="Regala W.M."/>
            <person name="Georgescu A.M."/>
            <person name="Vergez L.M."/>
            <person name="Land M.L."/>
            <person name="Motin V.L."/>
            <person name="Brubaker R.R."/>
            <person name="Fowler J."/>
            <person name="Hinnebusch J."/>
            <person name="Marceau M."/>
            <person name="Medigue C."/>
            <person name="Simonet M."/>
            <person name="Chenal-Francisque V."/>
            <person name="Souza B."/>
            <person name="Dacheux D."/>
            <person name="Elliott J.M."/>
            <person name="Derbise A."/>
            <person name="Hauser L.J."/>
            <person name="Garcia E."/>
        </authorList>
    </citation>
    <scope>NUCLEOTIDE SEQUENCE [LARGE SCALE GENOMIC DNA]</scope>
    <source>
        <strain>IP32953</strain>
    </source>
</reference>
<feature type="chain" id="PRO_0000239110" description="Magnesium transport protein CorA">
    <location>
        <begin position="1"/>
        <end position="316"/>
    </location>
</feature>
<feature type="transmembrane region" description="Helical" evidence="3">
    <location>
        <begin position="258"/>
        <end position="278"/>
    </location>
</feature>
<feature type="transmembrane region" description="Helical" evidence="3">
    <location>
        <begin position="290"/>
        <end position="310"/>
    </location>
</feature>
<feature type="short sequence motif" description="Probable selectivity filter" evidence="2">
    <location>
        <begin position="277"/>
        <end position="279"/>
    </location>
</feature>
<feature type="site" description="Essential for ion permeation" evidence="2">
    <location>
        <position position="253"/>
    </location>
</feature>
<gene>
    <name type="primary">corA</name>
    <name type="ordered locus">YPTB0198</name>
</gene>
<evidence type="ECO:0000250" key="1">
    <source>
        <dbReference type="UniProtKB" id="P0ABI4"/>
    </source>
</evidence>
<evidence type="ECO:0000250" key="2">
    <source>
        <dbReference type="UniProtKB" id="Q9WZ31"/>
    </source>
</evidence>
<evidence type="ECO:0000255" key="3"/>
<evidence type="ECO:0000305" key="4"/>
<comment type="function">
    <text evidence="1 2">Mediates influx of magnesium ions (By similarity). Alternates between open and closed states. Activated by low cytoplasmic Mg(2+) levels. Inactive when cytoplasmic Mg(2+) levels are high (By similarity).</text>
</comment>
<comment type="catalytic activity">
    <reaction evidence="1">
        <text>Mg(2+)(in) = Mg(2+)(out)</text>
        <dbReference type="Rhea" id="RHEA:29827"/>
        <dbReference type="ChEBI" id="CHEBI:18420"/>
    </reaction>
</comment>
<comment type="subunit">
    <text evidence="2">Homopentamer. In the absence of Mg(2+), interactions between subunits are weakened, and dimers, trimers and tetramers can be observed in vitro (By similarity).</text>
</comment>
<comment type="subcellular location">
    <subcellularLocation>
        <location evidence="1">Cell inner membrane</location>
        <topology evidence="2">Multi-pass membrane protein</topology>
    </subcellularLocation>
</comment>
<comment type="domain">
    <text evidence="2">The central ion permeation pathway is formed by the first transmembrane domain from each of the five subunits. Mg(2+) binding strengthens interactions between subunits and leads to the formation of a symmetrical homopentamer surrounding a closed ion permeation pathway. Low Mg(2+) concentrations trigger both a conformation change within each subunit and a loosening of the interactions between subunits. This results in an open ion conduction pathway. In addition, this results in a less symmetrical shape of the whole complex.</text>
</comment>
<comment type="similarity">
    <text evidence="4">Belongs to the CorA metal ion transporter (MIT) (TC 1.A.35) family.</text>
</comment>
<accession>Q66FY7</accession>
<organism>
    <name type="scientific">Yersinia pseudotuberculosis serotype I (strain IP32953)</name>
    <dbReference type="NCBI Taxonomy" id="273123"/>
    <lineage>
        <taxon>Bacteria</taxon>
        <taxon>Pseudomonadati</taxon>
        <taxon>Pseudomonadota</taxon>
        <taxon>Gammaproteobacteria</taxon>
        <taxon>Enterobacterales</taxon>
        <taxon>Yersiniaceae</taxon>
        <taxon>Yersinia</taxon>
    </lineage>
</organism>